<organism>
    <name type="scientific">Syconycteris australis</name>
    <name type="common">Southern blossom bat</name>
    <dbReference type="NCBI Taxonomy" id="58085"/>
    <lineage>
        <taxon>Eukaryota</taxon>
        <taxon>Metazoa</taxon>
        <taxon>Chordata</taxon>
        <taxon>Craniata</taxon>
        <taxon>Vertebrata</taxon>
        <taxon>Euteleostomi</taxon>
        <taxon>Mammalia</taxon>
        <taxon>Eutheria</taxon>
        <taxon>Laurasiatheria</taxon>
        <taxon>Chiroptera</taxon>
        <taxon>Yinpterochiroptera</taxon>
        <taxon>Pteropodoidea</taxon>
        <taxon>Pteropodidae</taxon>
        <taxon>Macroglossinae</taxon>
        <taxon>Syconycteris</taxon>
    </lineage>
</organism>
<evidence type="ECO:0000250" key="1">
    <source>
        <dbReference type="UniProtKB" id="P03891"/>
    </source>
</evidence>
<evidence type="ECO:0000250" key="2">
    <source>
        <dbReference type="UniProtKB" id="P03892"/>
    </source>
</evidence>
<evidence type="ECO:0000255" key="3"/>
<evidence type="ECO:0000305" key="4"/>
<accession>Q32ZZ5</accession>
<sequence length="347" mass="38871">MNPLILSMIMATIILGTLIVMTSSHWLMVWIGFEMNMLAILPVLMKKYNPRSMEAATKYFLTQATASMLLMLAITINLIYSGQWSTANPLNPTTSIIMTLALAMKLGLSPFHFWVPEVTQGIQLSSGLILLTWQKLAPMSILYQISPAINMDLLLSMSLMSVAIGGWGGLNQTQLRKIMAYSSIAHMGWMTAVMTYNPTMALLNLIIYILLTTTTFMTFMLNSTTTTLSLSHTWNKTPLLTTTILILMLSLGGLPPLSGFLPKWMIIQELTKNDSIITPTIMAITALLNLYFYMRLTYSTSLTMFPSVNNMKMKWQFNSMKQTTHLPPLIVLSTLILPMSPMLMLLE</sequence>
<keyword id="KW-0249">Electron transport</keyword>
<keyword id="KW-0472">Membrane</keyword>
<keyword id="KW-0496">Mitochondrion</keyword>
<keyword id="KW-0999">Mitochondrion inner membrane</keyword>
<keyword id="KW-0520">NAD</keyword>
<keyword id="KW-0679">Respiratory chain</keyword>
<keyword id="KW-1278">Translocase</keyword>
<keyword id="KW-0812">Transmembrane</keyword>
<keyword id="KW-1133">Transmembrane helix</keyword>
<keyword id="KW-0813">Transport</keyword>
<keyword id="KW-0830">Ubiquinone</keyword>
<name>NU2M_SYCAU</name>
<dbReference type="EC" id="7.1.1.2" evidence="1"/>
<dbReference type="EMBL" id="AY504597">
    <property type="protein sequence ID" value="AAS91462.1"/>
    <property type="molecule type" value="Genomic_DNA"/>
</dbReference>
<dbReference type="SMR" id="Q32ZZ5"/>
<dbReference type="GO" id="GO:0005743">
    <property type="term" value="C:mitochondrial inner membrane"/>
    <property type="evidence" value="ECO:0000250"/>
    <property type="project" value="UniProtKB"/>
</dbReference>
<dbReference type="GO" id="GO:0008137">
    <property type="term" value="F:NADH dehydrogenase (ubiquinone) activity"/>
    <property type="evidence" value="ECO:0000250"/>
    <property type="project" value="UniProtKB"/>
</dbReference>
<dbReference type="GO" id="GO:0006120">
    <property type="term" value="P:mitochondrial electron transport, NADH to ubiquinone"/>
    <property type="evidence" value="ECO:0000250"/>
    <property type="project" value="UniProtKB"/>
</dbReference>
<dbReference type="GO" id="GO:0032981">
    <property type="term" value="P:mitochondrial respiratory chain complex I assembly"/>
    <property type="evidence" value="ECO:0000250"/>
    <property type="project" value="UniProtKB"/>
</dbReference>
<dbReference type="InterPro" id="IPR050175">
    <property type="entry name" value="Complex_I_Subunit_2"/>
</dbReference>
<dbReference type="InterPro" id="IPR010933">
    <property type="entry name" value="NADH_DH_su2_C"/>
</dbReference>
<dbReference type="InterPro" id="IPR003917">
    <property type="entry name" value="NADH_UbQ_OxRdtase_chain2"/>
</dbReference>
<dbReference type="InterPro" id="IPR001750">
    <property type="entry name" value="ND/Mrp_TM"/>
</dbReference>
<dbReference type="PANTHER" id="PTHR46552">
    <property type="entry name" value="NADH-UBIQUINONE OXIDOREDUCTASE CHAIN 2"/>
    <property type="match status" value="1"/>
</dbReference>
<dbReference type="PANTHER" id="PTHR46552:SF1">
    <property type="entry name" value="NADH-UBIQUINONE OXIDOREDUCTASE CHAIN 2"/>
    <property type="match status" value="1"/>
</dbReference>
<dbReference type="Pfam" id="PF06444">
    <property type="entry name" value="NADH_dehy_S2_C"/>
    <property type="match status" value="1"/>
</dbReference>
<dbReference type="Pfam" id="PF00361">
    <property type="entry name" value="Proton_antipo_M"/>
    <property type="match status" value="1"/>
</dbReference>
<dbReference type="PRINTS" id="PR01436">
    <property type="entry name" value="NADHDHGNASE2"/>
</dbReference>
<geneLocation type="mitochondrion"/>
<reference key="1">
    <citation type="submission" date="2003-12" db="EMBL/GenBank/DDBJ databases">
        <title>Bats and birds: flying in the face of mtDNA evolutionary rates.</title>
        <authorList>
            <person name="Worthington Wilmer J.M."/>
            <person name="Schneider C.J."/>
            <person name="Sorenson M.D."/>
        </authorList>
    </citation>
    <scope>NUCLEOTIDE SEQUENCE [GENOMIC DNA]</scope>
    <source>
        <strain>Isolate 1</strain>
    </source>
</reference>
<protein>
    <recommendedName>
        <fullName evidence="1">NADH-ubiquinone oxidoreductase chain 2</fullName>
        <ecNumber evidence="1">7.1.1.2</ecNumber>
    </recommendedName>
    <alternativeName>
        <fullName>NADH dehydrogenase subunit 2</fullName>
    </alternativeName>
</protein>
<proteinExistence type="inferred from homology"/>
<gene>
    <name evidence="1" type="primary">MT-ND2</name>
    <name type="synonym">MTND2</name>
    <name type="synonym">NADH2</name>
    <name type="synonym">ND2</name>
</gene>
<comment type="function">
    <text evidence="1">Core subunit of the mitochondrial membrane respiratory chain NADH dehydrogenase (Complex I) which catalyzes electron transfer from NADH through the respiratory chain, using ubiquinone as an electron acceptor. Essential for the catalytic activity and assembly of complex I.</text>
</comment>
<comment type="catalytic activity">
    <reaction evidence="1">
        <text>a ubiquinone + NADH + 5 H(+)(in) = a ubiquinol + NAD(+) + 4 H(+)(out)</text>
        <dbReference type="Rhea" id="RHEA:29091"/>
        <dbReference type="Rhea" id="RHEA-COMP:9565"/>
        <dbReference type="Rhea" id="RHEA-COMP:9566"/>
        <dbReference type="ChEBI" id="CHEBI:15378"/>
        <dbReference type="ChEBI" id="CHEBI:16389"/>
        <dbReference type="ChEBI" id="CHEBI:17976"/>
        <dbReference type="ChEBI" id="CHEBI:57540"/>
        <dbReference type="ChEBI" id="CHEBI:57945"/>
        <dbReference type="EC" id="7.1.1.2"/>
    </reaction>
</comment>
<comment type="subunit">
    <text evidence="1 2">Core subunit of respiratory chain NADH dehydrogenase (Complex I) which is composed of 45 different subunits. Interacts with TMEM242 (By similarity).</text>
</comment>
<comment type="subcellular location">
    <subcellularLocation>
        <location evidence="2">Mitochondrion inner membrane</location>
        <topology evidence="3">Multi-pass membrane protein</topology>
    </subcellularLocation>
</comment>
<comment type="similarity">
    <text evidence="4">Belongs to the complex I subunit 2 family.</text>
</comment>
<feature type="chain" id="PRO_0000256683" description="NADH-ubiquinone oxidoreductase chain 2">
    <location>
        <begin position="1"/>
        <end position="347"/>
    </location>
</feature>
<feature type="transmembrane region" description="Helical" evidence="3">
    <location>
        <begin position="4"/>
        <end position="21"/>
    </location>
</feature>
<feature type="transmembrane region" description="Helical" evidence="3">
    <location>
        <begin position="26"/>
        <end position="45"/>
    </location>
</feature>
<feature type="transmembrane region" description="Helical" evidence="3">
    <location>
        <begin position="59"/>
        <end position="79"/>
    </location>
</feature>
<feature type="transmembrane region" description="Helical" evidence="3">
    <location>
        <begin position="96"/>
        <end position="116"/>
    </location>
</feature>
<feature type="transmembrane region" description="Helical" evidence="3">
    <location>
        <begin position="122"/>
        <end position="142"/>
    </location>
</feature>
<feature type="transmembrane region" description="Helical" evidence="3">
    <location>
        <begin position="148"/>
        <end position="168"/>
    </location>
</feature>
<feature type="transmembrane region" description="Helical" evidence="3">
    <location>
        <begin position="201"/>
        <end position="221"/>
    </location>
</feature>
<feature type="transmembrane region" description="Helical" evidence="3">
    <location>
        <begin position="242"/>
        <end position="262"/>
    </location>
</feature>
<feature type="transmembrane region" description="Helical" evidence="3">
    <location>
        <begin position="274"/>
        <end position="294"/>
    </location>
</feature>
<feature type="transmembrane region" description="Helical" evidence="3">
    <location>
        <begin position="326"/>
        <end position="346"/>
    </location>
</feature>